<sequence length="574" mass="68066">MIKEAIFHKSDVPYAYPLNENQLKIVLRTAVFDVDRVYVLYKDRYDWLGKFKIKPMVLTHTNELFDYYETTLELNKKFVYFFYLVSDGGEKLYYTEAGFYKKRPENHFWGFFHYPYIGEKDVFFAPEWTSDCMVYQIFPERFNNGDKSNDPENVKPWGEKPTADSFFGGDLQGIIDKIDYLKDLGINAIYLTPIFLSHSTHKYDTTDYYTIDPHFGDTQKARELVQKCHDNGIKVIFDAVFNHCGYDFFAFQDVIKNGKKSKYWDWFNIYEWPIKTHPKPSYEAFADTVWRMPKLMTKNPEVQKYLLEVAEYWIKEVDIDGWRLDVANEIDHHFWRKFREVVKAAKPEAIIVGEVWHDASPWLRGDQFDSVMNYPFRNAVVDFFAKRKISASRFNTMITEQLMRHMDSVNRVMFNLIGSHDTERFLTLANGMVARMKLALVFQFTFVGIPYIYYGDEVGMVGDYDPDCRRCMIWEEEKQNKSIFNFYKKLISIRRENEELKYGSFCTLYAIGRVFAFKREYKGKSIIVVLNNSSKQEVIFLNEVEGKEDILKMKELKRSGNLLYLQPNSAYILK</sequence>
<evidence type="ECO:0000250" key="1"/>
<evidence type="ECO:0000250" key="2">
    <source>
        <dbReference type="UniProtKB" id="P38940"/>
    </source>
</evidence>
<evidence type="ECO:0000250" key="3">
    <source>
        <dbReference type="UniProtKB" id="Q60053"/>
    </source>
</evidence>
<evidence type="ECO:0000305" key="4"/>
<evidence type="ECO:0000305" key="5">
    <source>
    </source>
</evidence>
<protein>
    <recommendedName>
        <fullName>Cyclomaltodextrinase</fullName>
        <shortName>CDase</shortName>
        <ecNumber>3.2.1.54</ecNumber>
    </recommendedName>
    <alternativeName>
        <fullName>Cyclomaltodextrin hydrolase, decycling</fullName>
    </alternativeName>
</protein>
<name>CDAS_THEP3</name>
<keyword id="KW-0106">Calcium</keyword>
<keyword id="KW-0903">Direct protein sequencing</keyword>
<keyword id="KW-0326">Glycosidase</keyword>
<keyword id="KW-0378">Hydrolase</keyword>
<keyword id="KW-0479">Metal-binding</keyword>
<keyword id="KW-1185">Reference proteome</keyword>
<accession>P29964</accession>
<accession>B0K7U0</accession>
<reference key="1">
    <citation type="journal article" date="1992" name="J. Bacteriol.">
        <title>Structure of the gene encoding cyclomaltodextrinase from Clostridium thermohydrosulfuricum 39E and characterization of the enzyme purified from Escherichia coli.</title>
        <authorList>
            <person name="Podkovyrov S.M."/>
            <person name="Zeikus J.G."/>
        </authorList>
    </citation>
    <scope>NUCLEOTIDE SEQUENCE [GENOMIC DNA]</scope>
    <scope>PROTEIN SEQUENCE OF 1-5</scope>
</reference>
<reference key="2">
    <citation type="submission" date="2008-01" db="EMBL/GenBank/DDBJ databases">
        <title>Complete sequence of Thermoanaerobacter pseudethanolicus 39E.</title>
        <authorList>
            <person name="Copeland A."/>
            <person name="Lucas S."/>
            <person name="Lapidus A."/>
            <person name="Barry K."/>
            <person name="Glavina del Rio T."/>
            <person name="Dalin E."/>
            <person name="Tice H."/>
            <person name="Pitluck S."/>
            <person name="Bruce D."/>
            <person name="Goodwin L."/>
            <person name="Saunders E."/>
            <person name="Brettin T."/>
            <person name="Detter J.C."/>
            <person name="Han C."/>
            <person name="Schmutz J."/>
            <person name="Larimer F."/>
            <person name="Land M."/>
            <person name="Hauser L."/>
            <person name="Kyrpides N."/>
            <person name="Lykidis A."/>
            <person name="Hemme C."/>
            <person name="Fields M.W."/>
            <person name="He Z."/>
            <person name="Zhou J."/>
            <person name="Richardson P."/>
        </authorList>
    </citation>
    <scope>NUCLEOTIDE SEQUENCE [LARGE SCALE GENOMIC DNA]</scope>
    <source>
        <strain>ATCC 33223 / DSM 2355 / 39E</strain>
    </source>
</reference>
<reference key="3">
    <citation type="journal article" date="1993" name="FEBS Lett.">
        <title>Analysis of the catalytic center of cyclomaltodextrinase from Thermoanaerobacter ethanolicus 39E.</title>
        <authorList>
            <person name="Podkovyrov S.M."/>
            <person name="Burdette D."/>
            <person name="Zeikus J.G."/>
        </authorList>
    </citation>
    <scope>ACTIVE SITES</scope>
    <scope>MUTANTS ASP-325-ASN; GLU-354-GLN AND ASP-421-ASN</scope>
</reference>
<proteinExistence type="evidence at protein level"/>
<feature type="chain" id="PRO_0000054309" description="Cyclomaltodextrinase">
    <location>
        <begin position="1"/>
        <end position="574"/>
    </location>
</feature>
<feature type="active site" description="Nucleophile" evidence="5">
    <location>
        <position position="325"/>
    </location>
</feature>
<feature type="active site" description="Proton donor" evidence="5">
    <location>
        <position position="354"/>
    </location>
</feature>
<feature type="binding site" evidence="3">
    <location>
        <position position="144"/>
    </location>
    <ligand>
        <name>Ca(2+)</name>
        <dbReference type="ChEBI" id="CHEBI:29108"/>
    </ligand>
</feature>
<feature type="binding site" evidence="3">
    <location>
        <position position="146"/>
    </location>
    <ligand>
        <name>Ca(2+)</name>
        <dbReference type="ChEBI" id="CHEBI:29108"/>
    </ligand>
</feature>
<feature type="binding site" evidence="3">
    <location>
        <position position="149"/>
    </location>
    <ligand>
        <name>Ca(2+)</name>
        <dbReference type="ChEBI" id="CHEBI:29108"/>
    </ligand>
</feature>
<feature type="binding site" evidence="3">
    <location>
        <position position="150"/>
    </location>
    <ligand>
        <name>Ca(2+)</name>
        <dbReference type="ChEBI" id="CHEBI:29108"/>
    </ligand>
</feature>
<feature type="binding site" evidence="3">
    <location>
        <position position="168"/>
    </location>
    <ligand>
        <name>Ca(2+)</name>
        <dbReference type="ChEBI" id="CHEBI:29108"/>
    </ligand>
</feature>
<feature type="binding site" evidence="3">
    <location>
        <position position="170"/>
    </location>
    <ligand>
        <name>Ca(2+)</name>
        <dbReference type="ChEBI" id="CHEBI:29108"/>
    </ligand>
</feature>
<feature type="binding site" evidence="2">
    <location>
        <position position="243"/>
    </location>
    <ligand>
        <name>substrate</name>
    </ligand>
</feature>
<feature type="binding site" evidence="2">
    <location>
        <position position="323"/>
    </location>
    <ligand>
        <name>substrate</name>
    </ligand>
</feature>
<feature type="binding site" evidence="2">
    <location>
        <begin position="420"/>
        <end position="421"/>
    </location>
    <ligand>
        <name>substrate</name>
    </ligand>
</feature>
<feature type="binding site" evidence="2">
    <location>
        <position position="465"/>
    </location>
    <ligand>
        <name>substrate</name>
    </ligand>
</feature>
<feature type="binding site" evidence="2">
    <location>
        <position position="469"/>
    </location>
    <ligand>
        <name>substrate</name>
    </ligand>
</feature>
<feature type="site" description="Transition state stabilizer" evidence="1">
    <location>
        <position position="421"/>
    </location>
</feature>
<feature type="mutagenesis site" description="Loss of activity.">
    <original>D</original>
    <variation>N</variation>
    <location>
        <position position="325"/>
    </location>
</feature>
<feature type="mutagenesis site" description="Loss of activity.">
    <original>E</original>
    <variation>Q</variation>
    <location>
        <position position="354"/>
    </location>
</feature>
<feature type="mutagenesis site" description="Loss of activity.">
    <original>D</original>
    <variation>N</variation>
    <location>
        <position position="421"/>
    </location>
</feature>
<feature type="sequence conflict" description="In Ref. 1; AA sequence." evidence="4" ref="1">
    <original>E</original>
    <variation>G</variation>
    <location>
        <position position="4"/>
    </location>
</feature>
<feature type="sequence conflict" description="In Ref. 1; AAA23219." evidence="4" ref="1">
    <original>P</original>
    <variation>G</variation>
    <location>
        <position position="278"/>
    </location>
</feature>
<dbReference type="EC" id="3.2.1.54"/>
<dbReference type="EMBL" id="M88602">
    <property type="protein sequence ID" value="AAA23219.1"/>
    <property type="molecule type" value="Genomic_DNA"/>
</dbReference>
<dbReference type="EMBL" id="CP000924">
    <property type="protein sequence ID" value="ABY94339.1"/>
    <property type="molecule type" value="Genomic_DNA"/>
</dbReference>
<dbReference type="RefSeq" id="WP_012269128.1">
    <property type="nucleotide sequence ID" value="NC_010321.1"/>
</dbReference>
<dbReference type="SMR" id="P29964"/>
<dbReference type="STRING" id="340099.Teth39_0676"/>
<dbReference type="CAZy" id="CBM34">
    <property type="family name" value="Carbohydrate-Binding Module Family 34"/>
</dbReference>
<dbReference type="CAZy" id="GH13">
    <property type="family name" value="Glycoside Hydrolase Family 13"/>
</dbReference>
<dbReference type="KEGG" id="tpd:Teth39_0676"/>
<dbReference type="eggNOG" id="COG0366">
    <property type="taxonomic scope" value="Bacteria"/>
</dbReference>
<dbReference type="HOGENOM" id="CLU_006462_6_2_9"/>
<dbReference type="Proteomes" id="UP000002156">
    <property type="component" value="Chromosome"/>
</dbReference>
<dbReference type="GO" id="GO:0047798">
    <property type="term" value="F:cyclomaltodextrinase activity"/>
    <property type="evidence" value="ECO:0007669"/>
    <property type="project" value="UniProtKB-EC"/>
</dbReference>
<dbReference type="GO" id="GO:0046872">
    <property type="term" value="F:metal ion binding"/>
    <property type="evidence" value="ECO:0007669"/>
    <property type="project" value="UniProtKB-KW"/>
</dbReference>
<dbReference type="GO" id="GO:0005975">
    <property type="term" value="P:carbohydrate metabolic process"/>
    <property type="evidence" value="ECO:0007669"/>
    <property type="project" value="InterPro"/>
</dbReference>
<dbReference type="CDD" id="cd11338">
    <property type="entry name" value="AmyAc_CMD"/>
    <property type="match status" value="1"/>
</dbReference>
<dbReference type="CDD" id="cd02857">
    <property type="entry name" value="E_set_CDase_PDE_N"/>
    <property type="match status" value="1"/>
</dbReference>
<dbReference type="Gene3D" id="3.20.20.80">
    <property type="entry name" value="Glycosidases"/>
    <property type="match status" value="1"/>
</dbReference>
<dbReference type="Gene3D" id="2.60.40.1180">
    <property type="entry name" value="Golgi alpha-mannosidase II"/>
    <property type="match status" value="1"/>
</dbReference>
<dbReference type="Gene3D" id="2.60.40.10">
    <property type="entry name" value="Immunoglobulins"/>
    <property type="match status" value="1"/>
</dbReference>
<dbReference type="Gene3D" id="3.90.400.10">
    <property type="entry name" value="Oligo-1,6-glucosidase, Domain 2"/>
    <property type="match status" value="1"/>
</dbReference>
<dbReference type="InterPro" id="IPR006047">
    <property type="entry name" value="Glyco_hydro_13_cat_dom"/>
</dbReference>
<dbReference type="InterPro" id="IPR004185">
    <property type="entry name" value="Glyco_hydro_13_lg-like_dom"/>
</dbReference>
<dbReference type="InterPro" id="IPR013780">
    <property type="entry name" value="Glyco_hydro_b"/>
</dbReference>
<dbReference type="InterPro" id="IPR017853">
    <property type="entry name" value="Glycoside_hydrolase_SF"/>
</dbReference>
<dbReference type="InterPro" id="IPR013783">
    <property type="entry name" value="Ig-like_fold"/>
</dbReference>
<dbReference type="InterPro" id="IPR014756">
    <property type="entry name" value="Ig_E-set"/>
</dbReference>
<dbReference type="InterPro" id="IPR045857">
    <property type="entry name" value="O16G_dom_2"/>
</dbReference>
<dbReference type="PANTHER" id="PTHR10357">
    <property type="entry name" value="ALPHA-AMYLASE FAMILY MEMBER"/>
    <property type="match status" value="1"/>
</dbReference>
<dbReference type="PANTHER" id="PTHR10357:SF210">
    <property type="entry name" value="MALTODEXTRIN GLUCOSIDASE"/>
    <property type="match status" value="1"/>
</dbReference>
<dbReference type="Pfam" id="PF00128">
    <property type="entry name" value="Alpha-amylase"/>
    <property type="match status" value="1"/>
</dbReference>
<dbReference type="Pfam" id="PF02903">
    <property type="entry name" value="Alpha-amylase_N"/>
    <property type="match status" value="1"/>
</dbReference>
<dbReference type="SMART" id="SM00642">
    <property type="entry name" value="Aamy"/>
    <property type="match status" value="1"/>
</dbReference>
<dbReference type="SUPFAM" id="SSF51445">
    <property type="entry name" value="(Trans)glycosidases"/>
    <property type="match status" value="1"/>
</dbReference>
<dbReference type="SUPFAM" id="SSF81296">
    <property type="entry name" value="E set domains"/>
    <property type="match status" value="1"/>
</dbReference>
<dbReference type="SUPFAM" id="SSF51011">
    <property type="entry name" value="Glycosyl hydrolase domain"/>
    <property type="match status" value="1"/>
</dbReference>
<organism>
    <name type="scientific">Thermoanaerobacter pseudethanolicus (strain ATCC 33223 / 39E)</name>
    <name type="common">Clostridium thermohydrosulfuricum</name>
    <dbReference type="NCBI Taxonomy" id="340099"/>
    <lineage>
        <taxon>Bacteria</taxon>
        <taxon>Bacillati</taxon>
        <taxon>Bacillota</taxon>
        <taxon>Clostridia</taxon>
        <taxon>Thermoanaerobacterales</taxon>
        <taxon>Thermoanaerobacteraceae</taxon>
        <taxon>Thermoanaerobacter</taxon>
    </lineage>
</organism>
<comment type="function">
    <text>Hydrolyzes cyclodextrins. Can also act on linear maltodextrins, with the exception of maltose.</text>
</comment>
<comment type="catalytic activity">
    <reaction>
        <text>cyclomaltodextrin + H2O = linear maltodextrin</text>
        <dbReference type="Rhea" id="RHEA:23980"/>
        <dbReference type="Rhea" id="RHEA-COMP:14584"/>
        <dbReference type="Rhea" id="RHEA-COMP:14707"/>
        <dbReference type="ChEBI" id="CHEBI:15377"/>
        <dbReference type="ChEBI" id="CHEBI:17623"/>
        <dbReference type="ChEBI" id="CHEBI:18398"/>
        <dbReference type="EC" id="3.2.1.54"/>
    </reaction>
</comment>
<comment type="cofactor">
    <cofactor evidence="2">
        <name>Ca(2+)</name>
        <dbReference type="ChEBI" id="CHEBI:29108"/>
    </cofactor>
    <text evidence="2">Binds 1 Ca(2+) ion per subunit.</text>
</comment>
<comment type="subunit">
    <text>Monomer.</text>
</comment>
<comment type="similarity">
    <text evidence="4">Belongs to the glycosyl hydrolase 13 family.</text>
</comment>
<gene>
    <name type="ordered locus">Teth39_0676</name>
</gene>